<sequence length="264" mass="28223">MPPVPNDKPFTLAGRTYQSRLLVGTGKYKDLEETRAAIEASGAEIVTVAVRRTNIGQNPGEPNLLDVISPERYTILPNTAGCFTAEDAVRTCRLARELLDGHKLVKLEVLADQKTLFPNVIETLKAAEVLIKDGFDVMVYTSDDPIIARQLAEMGCIAVMPLAGLIGTGLGICNPYNLRIILEEATVPVLVDAGVGTASDATIAMELGCEAVLMNSAIAHAQNPVLMAEAMKYAIEAGRLAYLAGRMPKKLYASASSPLDGLIR</sequence>
<name>THIG_STUS1</name>
<accession>A4VRK5</accession>
<proteinExistence type="inferred from homology"/>
<feature type="chain" id="PRO_1000026031" description="Thiazole synthase">
    <location>
        <begin position="1"/>
        <end position="264"/>
    </location>
</feature>
<feature type="active site" description="Schiff-base intermediate with DXP" evidence="1">
    <location>
        <position position="106"/>
    </location>
</feature>
<feature type="binding site" evidence="1">
    <location>
        <position position="167"/>
    </location>
    <ligand>
        <name>1-deoxy-D-xylulose 5-phosphate</name>
        <dbReference type="ChEBI" id="CHEBI:57792"/>
    </ligand>
</feature>
<feature type="binding site" evidence="1">
    <location>
        <begin position="193"/>
        <end position="194"/>
    </location>
    <ligand>
        <name>1-deoxy-D-xylulose 5-phosphate</name>
        <dbReference type="ChEBI" id="CHEBI:57792"/>
    </ligand>
</feature>
<feature type="binding site" evidence="1">
    <location>
        <begin position="215"/>
        <end position="216"/>
    </location>
    <ligand>
        <name>1-deoxy-D-xylulose 5-phosphate</name>
        <dbReference type="ChEBI" id="CHEBI:57792"/>
    </ligand>
</feature>
<dbReference type="EC" id="2.8.1.10" evidence="1"/>
<dbReference type="EMBL" id="CP000304">
    <property type="protein sequence ID" value="ABP81606.1"/>
    <property type="molecule type" value="Genomic_DNA"/>
</dbReference>
<dbReference type="RefSeq" id="WP_011914988.1">
    <property type="nucleotide sequence ID" value="NC_009434.1"/>
</dbReference>
<dbReference type="SMR" id="A4VRK5"/>
<dbReference type="KEGG" id="psa:PST_3983"/>
<dbReference type="eggNOG" id="COG2022">
    <property type="taxonomic scope" value="Bacteria"/>
</dbReference>
<dbReference type="HOGENOM" id="CLU_062233_1_1_6"/>
<dbReference type="UniPathway" id="UPA00060"/>
<dbReference type="Proteomes" id="UP000000233">
    <property type="component" value="Chromosome"/>
</dbReference>
<dbReference type="GO" id="GO:0005737">
    <property type="term" value="C:cytoplasm"/>
    <property type="evidence" value="ECO:0007669"/>
    <property type="project" value="UniProtKB-SubCell"/>
</dbReference>
<dbReference type="GO" id="GO:1990107">
    <property type="term" value="F:thiazole synthase activity"/>
    <property type="evidence" value="ECO:0007669"/>
    <property type="project" value="UniProtKB-EC"/>
</dbReference>
<dbReference type="GO" id="GO:0009229">
    <property type="term" value="P:thiamine diphosphate biosynthetic process"/>
    <property type="evidence" value="ECO:0007669"/>
    <property type="project" value="UniProtKB-UniRule"/>
</dbReference>
<dbReference type="CDD" id="cd04728">
    <property type="entry name" value="ThiG"/>
    <property type="match status" value="1"/>
</dbReference>
<dbReference type="Gene3D" id="3.20.20.70">
    <property type="entry name" value="Aldolase class I"/>
    <property type="match status" value="1"/>
</dbReference>
<dbReference type="HAMAP" id="MF_00443">
    <property type="entry name" value="ThiG"/>
    <property type="match status" value="1"/>
</dbReference>
<dbReference type="InterPro" id="IPR013785">
    <property type="entry name" value="Aldolase_TIM"/>
</dbReference>
<dbReference type="InterPro" id="IPR033983">
    <property type="entry name" value="Thiazole_synthase_ThiG"/>
</dbReference>
<dbReference type="InterPro" id="IPR008867">
    <property type="entry name" value="ThiG"/>
</dbReference>
<dbReference type="PANTHER" id="PTHR34266">
    <property type="entry name" value="THIAZOLE SYNTHASE"/>
    <property type="match status" value="1"/>
</dbReference>
<dbReference type="PANTHER" id="PTHR34266:SF2">
    <property type="entry name" value="THIAZOLE SYNTHASE"/>
    <property type="match status" value="1"/>
</dbReference>
<dbReference type="Pfam" id="PF05690">
    <property type="entry name" value="ThiG"/>
    <property type="match status" value="1"/>
</dbReference>
<dbReference type="SUPFAM" id="SSF110399">
    <property type="entry name" value="ThiG-like"/>
    <property type="match status" value="1"/>
</dbReference>
<reference key="1">
    <citation type="journal article" date="2008" name="Proc. Natl. Acad. Sci. U.S.A.">
        <title>Nitrogen fixation island and rhizosphere competence traits in the genome of root-associated Pseudomonas stutzeri A1501.</title>
        <authorList>
            <person name="Yan Y."/>
            <person name="Yang J."/>
            <person name="Dou Y."/>
            <person name="Chen M."/>
            <person name="Ping S."/>
            <person name="Peng J."/>
            <person name="Lu W."/>
            <person name="Zhang W."/>
            <person name="Yao Z."/>
            <person name="Li H."/>
            <person name="Liu W."/>
            <person name="He S."/>
            <person name="Geng L."/>
            <person name="Zhang X."/>
            <person name="Yang F."/>
            <person name="Yu H."/>
            <person name="Zhan Y."/>
            <person name="Li D."/>
            <person name="Lin Z."/>
            <person name="Wang Y."/>
            <person name="Elmerich C."/>
            <person name="Lin M."/>
            <person name="Jin Q."/>
        </authorList>
    </citation>
    <scope>NUCLEOTIDE SEQUENCE [LARGE SCALE GENOMIC DNA]</scope>
    <source>
        <strain>A1501</strain>
    </source>
</reference>
<organism>
    <name type="scientific">Stutzerimonas stutzeri (strain A1501)</name>
    <name type="common">Pseudomonas stutzeri</name>
    <dbReference type="NCBI Taxonomy" id="379731"/>
    <lineage>
        <taxon>Bacteria</taxon>
        <taxon>Pseudomonadati</taxon>
        <taxon>Pseudomonadota</taxon>
        <taxon>Gammaproteobacteria</taxon>
        <taxon>Pseudomonadales</taxon>
        <taxon>Pseudomonadaceae</taxon>
        <taxon>Stutzerimonas</taxon>
    </lineage>
</organism>
<gene>
    <name evidence="1" type="primary">thiG</name>
    <name type="ordered locus">PST_3983</name>
</gene>
<comment type="function">
    <text evidence="1">Catalyzes the rearrangement of 1-deoxy-D-xylulose 5-phosphate (DXP) to produce the thiazole phosphate moiety of thiamine. Sulfur is provided by the thiocarboxylate moiety of the carrier protein ThiS. In vitro, sulfur can be provided by H(2)S.</text>
</comment>
<comment type="catalytic activity">
    <reaction evidence="1">
        <text>[ThiS sulfur-carrier protein]-C-terminal-Gly-aminoethanethioate + 2-iminoacetate + 1-deoxy-D-xylulose 5-phosphate = [ThiS sulfur-carrier protein]-C-terminal Gly-Gly + 2-[(2R,5Z)-2-carboxy-4-methylthiazol-5(2H)-ylidene]ethyl phosphate + 2 H2O + H(+)</text>
        <dbReference type="Rhea" id="RHEA:26297"/>
        <dbReference type="Rhea" id="RHEA-COMP:12909"/>
        <dbReference type="Rhea" id="RHEA-COMP:19908"/>
        <dbReference type="ChEBI" id="CHEBI:15377"/>
        <dbReference type="ChEBI" id="CHEBI:15378"/>
        <dbReference type="ChEBI" id="CHEBI:57792"/>
        <dbReference type="ChEBI" id="CHEBI:62899"/>
        <dbReference type="ChEBI" id="CHEBI:77846"/>
        <dbReference type="ChEBI" id="CHEBI:90778"/>
        <dbReference type="ChEBI" id="CHEBI:232372"/>
        <dbReference type="EC" id="2.8.1.10"/>
    </reaction>
</comment>
<comment type="pathway">
    <text evidence="1">Cofactor biosynthesis; thiamine diphosphate biosynthesis.</text>
</comment>
<comment type="subunit">
    <text evidence="1">Homotetramer. Forms heterodimers with either ThiH or ThiS.</text>
</comment>
<comment type="subcellular location">
    <subcellularLocation>
        <location evidence="1">Cytoplasm</location>
    </subcellularLocation>
</comment>
<comment type="similarity">
    <text evidence="1">Belongs to the ThiG family.</text>
</comment>
<protein>
    <recommendedName>
        <fullName evidence="1">Thiazole synthase</fullName>
        <ecNumber evidence="1">2.8.1.10</ecNumber>
    </recommendedName>
</protein>
<evidence type="ECO:0000255" key="1">
    <source>
        <dbReference type="HAMAP-Rule" id="MF_00443"/>
    </source>
</evidence>
<keyword id="KW-0963">Cytoplasm</keyword>
<keyword id="KW-1185">Reference proteome</keyword>
<keyword id="KW-0704">Schiff base</keyword>
<keyword id="KW-0784">Thiamine biosynthesis</keyword>
<keyword id="KW-0808">Transferase</keyword>